<sequence>MSKKSNKNLAFSLLGLIISMVLLSFASVPIYNLFCKVTGYGGTTAKETVSVYSKVKGTKPIIIEFDANVDKDLPWRFIPRQQRVQIVPGQNTLVFYETENLSNNDIIGTSVYNVTPNKAGKYFVKIHCFCFEEQLLKADEKVLMPVTFYIDKDFELDPEMQDIKVLTLSYSFFKVREIASLRGNTKY</sequence>
<keyword id="KW-0997">Cell inner membrane</keyword>
<keyword id="KW-1003">Cell membrane</keyword>
<keyword id="KW-0186">Copper</keyword>
<keyword id="KW-0472">Membrane</keyword>
<keyword id="KW-0735">Signal-anchor</keyword>
<keyword id="KW-0812">Transmembrane</keyword>
<keyword id="KW-1133">Transmembrane helix</keyword>
<feature type="chain" id="PRO_0000246143" description="Cytochrome c oxidase assembly protein CtaG">
    <location>
        <begin position="1"/>
        <end position="187"/>
    </location>
</feature>
<feature type="topological domain" description="Cytoplasmic" evidence="1">
    <location>
        <begin position="1"/>
        <end position="9"/>
    </location>
</feature>
<feature type="transmembrane region" description="Helical; Signal-anchor for type II membrane protein" evidence="1">
    <location>
        <begin position="10"/>
        <end position="30"/>
    </location>
</feature>
<feature type="topological domain" description="Periplasmic" evidence="1">
    <location>
        <begin position="31"/>
        <end position="187"/>
    </location>
</feature>
<accession>Q4UM75</accession>
<comment type="function">
    <text evidence="1">Exerts its effect at some terminal stage of cytochrome c oxidase synthesis, probably by being involved in the insertion of the copper B into subunit I.</text>
</comment>
<comment type="subcellular location">
    <subcellularLocation>
        <location evidence="1">Cell inner membrane</location>
        <topology evidence="1">Single-pass type II membrane protein</topology>
        <orientation evidence="1">Periplasmic side</orientation>
    </subcellularLocation>
</comment>
<comment type="similarity">
    <text evidence="1">Belongs to the COX11/CtaG family.</text>
</comment>
<organism>
    <name type="scientific">Rickettsia felis (strain ATCC VR-1525 / URRWXCal2)</name>
    <name type="common">Rickettsia azadi</name>
    <dbReference type="NCBI Taxonomy" id="315456"/>
    <lineage>
        <taxon>Bacteria</taxon>
        <taxon>Pseudomonadati</taxon>
        <taxon>Pseudomonadota</taxon>
        <taxon>Alphaproteobacteria</taxon>
        <taxon>Rickettsiales</taxon>
        <taxon>Rickettsiaceae</taxon>
        <taxon>Rickettsieae</taxon>
        <taxon>Rickettsia</taxon>
        <taxon>spotted fever group</taxon>
    </lineage>
</organism>
<reference key="1">
    <citation type="journal article" date="2005" name="PLoS Biol.">
        <title>The genome sequence of Rickettsia felis identifies the first putative conjugative plasmid in an obligate intracellular parasite.</title>
        <authorList>
            <person name="Ogata H."/>
            <person name="Renesto P."/>
            <person name="Audic S."/>
            <person name="Robert C."/>
            <person name="Blanc G."/>
            <person name="Fournier P.-E."/>
            <person name="Parinello H."/>
            <person name="Claverie J.-M."/>
            <person name="Raoult D."/>
        </authorList>
    </citation>
    <scope>NUCLEOTIDE SEQUENCE [LARGE SCALE GENOMIC DNA]</scope>
    <source>
        <strain>ATCC VR-1525 / URRWXCal2</strain>
    </source>
</reference>
<proteinExistence type="inferred from homology"/>
<name>COXZ_RICFE</name>
<gene>
    <name evidence="1" type="primary">ctaG</name>
    <name type="ordered locus">RF_0494</name>
</gene>
<dbReference type="EMBL" id="CP000053">
    <property type="protein sequence ID" value="AAY61345.1"/>
    <property type="molecule type" value="Genomic_DNA"/>
</dbReference>
<dbReference type="SMR" id="Q4UM75"/>
<dbReference type="STRING" id="315456.RF_0494"/>
<dbReference type="KEGG" id="rfe:RF_0494"/>
<dbReference type="eggNOG" id="COG3175">
    <property type="taxonomic scope" value="Bacteria"/>
</dbReference>
<dbReference type="HOGENOM" id="CLU_045000_5_3_5"/>
<dbReference type="OrthoDB" id="9804841at2"/>
<dbReference type="Proteomes" id="UP000008548">
    <property type="component" value="Chromosome"/>
</dbReference>
<dbReference type="GO" id="GO:0005886">
    <property type="term" value="C:plasma membrane"/>
    <property type="evidence" value="ECO:0007669"/>
    <property type="project" value="UniProtKB-SubCell"/>
</dbReference>
<dbReference type="GO" id="GO:0005507">
    <property type="term" value="F:copper ion binding"/>
    <property type="evidence" value="ECO:0007669"/>
    <property type="project" value="InterPro"/>
</dbReference>
<dbReference type="GO" id="GO:0008535">
    <property type="term" value="P:respiratory chain complex IV assembly"/>
    <property type="evidence" value="ECO:0007669"/>
    <property type="project" value="UniProtKB-UniRule"/>
</dbReference>
<dbReference type="FunFam" id="2.60.370.10:FF:000001">
    <property type="entry name" value="COX11 cytochrome c oxidase assembly homolog"/>
    <property type="match status" value="1"/>
</dbReference>
<dbReference type="Gene3D" id="2.60.370.10">
    <property type="entry name" value="Ctag/Cox11"/>
    <property type="match status" value="1"/>
</dbReference>
<dbReference type="HAMAP" id="MF_00155">
    <property type="entry name" value="CtaG"/>
    <property type="match status" value="1"/>
</dbReference>
<dbReference type="InterPro" id="IPR023471">
    <property type="entry name" value="CtaG/Cox11_dom_sf"/>
</dbReference>
<dbReference type="InterPro" id="IPR007533">
    <property type="entry name" value="Cyt_c_oxidase_assmbl_CtaG"/>
</dbReference>
<dbReference type="NCBIfam" id="NF003465">
    <property type="entry name" value="PRK05089.1"/>
    <property type="match status" value="1"/>
</dbReference>
<dbReference type="PANTHER" id="PTHR21320:SF3">
    <property type="entry name" value="CYTOCHROME C OXIDASE ASSEMBLY PROTEIN COX11, MITOCHONDRIAL-RELATED"/>
    <property type="match status" value="1"/>
</dbReference>
<dbReference type="PANTHER" id="PTHR21320">
    <property type="entry name" value="CYTOCHROME C OXIDASE ASSEMBLY PROTEIN COX11-RELATED"/>
    <property type="match status" value="1"/>
</dbReference>
<dbReference type="Pfam" id="PF04442">
    <property type="entry name" value="CtaG_Cox11"/>
    <property type="match status" value="1"/>
</dbReference>
<dbReference type="PIRSF" id="PIRSF005413">
    <property type="entry name" value="COX11"/>
    <property type="match status" value="1"/>
</dbReference>
<dbReference type="SUPFAM" id="SSF110111">
    <property type="entry name" value="Ctag/Cox11"/>
    <property type="match status" value="1"/>
</dbReference>
<protein>
    <recommendedName>
        <fullName evidence="1">Cytochrome c oxidase assembly protein CtaG</fullName>
    </recommendedName>
</protein>
<evidence type="ECO:0000255" key="1">
    <source>
        <dbReference type="HAMAP-Rule" id="MF_00155"/>
    </source>
</evidence>